<organism>
    <name type="scientific">Paramagnetospirillum magneticum (strain ATCC 700264 / AMB-1)</name>
    <name type="common">Magnetospirillum magneticum</name>
    <dbReference type="NCBI Taxonomy" id="342108"/>
    <lineage>
        <taxon>Bacteria</taxon>
        <taxon>Pseudomonadati</taxon>
        <taxon>Pseudomonadota</taxon>
        <taxon>Alphaproteobacteria</taxon>
        <taxon>Rhodospirillales</taxon>
        <taxon>Magnetospirillaceae</taxon>
        <taxon>Paramagnetospirillum</taxon>
    </lineage>
</organism>
<name>Y3341_PARM1</name>
<reference key="1">
    <citation type="journal article" date="2005" name="DNA Res.">
        <title>Complete genome sequence of the facultative anaerobic magnetotactic bacterium Magnetospirillum sp. strain AMB-1.</title>
        <authorList>
            <person name="Matsunaga T."/>
            <person name="Okamura Y."/>
            <person name="Fukuda Y."/>
            <person name="Wahyudi A.T."/>
            <person name="Murase Y."/>
            <person name="Takeyama H."/>
        </authorList>
    </citation>
    <scope>NUCLEOTIDE SEQUENCE [LARGE SCALE GENOMIC DNA]</scope>
    <source>
        <strain>ATCC 700264 / AMB-1</strain>
    </source>
</reference>
<dbReference type="EMBL" id="AP007255">
    <property type="protein sequence ID" value="BAE52145.1"/>
    <property type="molecule type" value="Genomic_DNA"/>
</dbReference>
<dbReference type="RefSeq" id="WP_011385701.1">
    <property type="nucleotide sequence ID" value="NC_007626.1"/>
</dbReference>
<dbReference type="STRING" id="342108.amb3341"/>
<dbReference type="KEGG" id="mag:amb3341"/>
<dbReference type="HOGENOM" id="CLU_112904_0_0_5"/>
<dbReference type="OrthoDB" id="9798434at2"/>
<dbReference type="Proteomes" id="UP000007058">
    <property type="component" value="Chromosome"/>
</dbReference>
<dbReference type="HAMAP" id="MF_00678">
    <property type="entry name" value="UPF0262"/>
    <property type="match status" value="1"/>
</dbReference>
<dbReference type="InterPro" id="IPR008321">
    <property type="entry name" value="UCP032146"/>
</dbReference>
<dbReference type="NCBIfam" id="NF002769">
    <property type="entry name" value="PRK02853.1"/>
    <property type="match status" value="1"/>
</dbReference>
<dbReference type="Pfam" id="PF06793">
    <property type="entry name" value="UPF0262"/>
    <property type="match status" value="1"/>
</dbReference>
<dbReference type="PIRSF" id="PIRSF032146">
    <property type="entry name" value="UCP032146"/>
    <property type="match status" value="1"/>
</dbReference>
<gene>
    <name type="ordered locus">amb3341</name>
</gene>
<feature type="chain" id="PRO_0000314197" description="UPF0262 protein amb3341">
    <location>
        <begin position="1"/>
        <end position="157"/>
    </location>
</feature>
<proteinExistence type="inferred from homology"/>
<sequence>MPHRQKLAKIELVEKYQVRRAAEVEHERAVAVYDLLEENYFAPNGDFIGPYALYIKLEDTRLIFDVRKEDETPLVQVPLPLKTFQSIVKDYFMICESYFAAIKKSTPSQIEAIDMGRRGLHNEGSELLRERLGGKIDVDFDTARRLFTLICVLHIRG</sequence>
<comment type="similarity">
    <text evidence="1">Belongs to the UPF0262 family.</text>
</comment>
<evidence type="ECO:0000255" key="1">
    <source>
        <dbReference type="HAMAP-Rule" id="MF_00678"/>
    </source>
</evidence>
<accession>Q2W1Y0</accession>
<protein>
    <recommendedName>
        <fullName evidence="1">UPF0262 protein amb3341</fullName>
    </recommendedName>
</protein>